<dbReference type="EC" id="2.3.1.183" evidence="3"/>
<dbReference type="EMBL" id="M62753">
    <property type="protein sequence ID" value="AAA26705.1"/>
    <property type="molecule type" value="Genomic_DNA"/>
</dbReference>
<dbReference type="EMBL" id="AL939115">
    <property type="protein sequence ID" value="CAB90987.1"/>
    <property type="molecule type" value="Genomic_DNA"/>
</dbReference>
<dbReference type="EMBL" id="M37919">
    <property type="protein sequence ID" value="AAA26766.2"/>
    <property type="molecule type" value="Genomic_DNA"/>
</dbReference>
<dbReference type="PIR" id="JH0246">
    <property type="entry name" value="JH0246"/>
</dbReference>
<dbReference type="PIR" id="T42042">
    <property type="entry name" value="T42042"/>
</dbReference>
<dbReference type="RefSeq" id="NP_627417.1">
    <property type="nucleotide sequence ID" value="NC_003888.3"/>
</dbReference>
<dbReference type="RefSeq" id="WP_003975614.1">
    <property type="nucleotide sequence ID" value="NZ_VNID01000013.1"/>
</dbReference>
<dbReference type="SMR" id="P21861"/>
<dbReference type="STRING" id="100226.gene:17760821"/>
<dbReference type="PaxDb" id="100226-SCO3203"/>
<dbReference type="KEGG" id="sco:SCO3203"/>
<dbReference type="PATRIC" id="fig|100226.15.peg.3263"/>
<dbReference type="eggNOG" id="COG1247">
    <property type="taxonomic scope" value="Bacteria"/>
</dbReference>
<dbReference type="HOGENOM" id="CLU_013985_4_2_11"/>
<dbReference type="InParanoid" id="P21861"/>
<dbReference type="OrthoDB" id="3173333at2"/>
<dbReference type="PhylomeDB" id="P21861"/>
<dbReference type="SABIO-RK" id="P21861"/>
<dbReference type="Proteomes" id="UP000001973">
    <property type="component" value="Chromosome"/>
</dbReference>
<dbReference type="GO" id="GO:0102971">
    <property type="term" value="F:phosphinothricin N-acetyltransferase activity"/>
    <property type="evidence" value="ECO:0007669"/>
    <property type="project" value="UniProtKB-EC"/>
</dbReference>
<dbReference type="GO" id="GO:0046677">
    <property type="term" value="P:response to antibiotic"/>
    <property type="evidence" value="ECO:0007669"/>
    <property type="project" value="UniProtKB-KW"/>
</dbReference>
<dbReference type="GO" id="GO:0009635">
    <property type="term" value="P:response to herbicide"/>
    <property type="evidence" value="ECO:0007669"/>
    <property type="project" value="UniProtKB-KW"/>
</dbReference>
<dbReference type="CDD" id="cd04301">
    <property type="entry name" value="NAT_SF"/>
    <property type="match status" value="1"/>
</dbReference>
<dbReference type="Gene3D" id="3.40.630.30">
    <property type="match status" value="1"/>
</dbReference>
<dbReference type="InterPro" id="IPR016181">
    <property type="entry name" value="Acyl_CoA_acyltransferase"/>
</dbReference>
<dbReference type="InterPro" id="IPR000182">
    <property type="entry name" value="GNAT_dom"/>
</dbReference>
<dbReference type="PANTHER" id="PTHR43072">
    <property type="entry name" value="N-ACETYLTRANSFERASE"/>
    <property type="match status" value="1"/>
</dbReference>
<dbReference type="PANTHER" id="PTHR43072:SF23">
    <property type="entry name" value="UPF0039 PROTEIN C11D3.02C"/>
    <property type="match status" value="1"/>
</dbReference>
<dbReference type="Pfam" id="PF13420">
    <property type="entry name" value="Acetyltransf_4"/>
    <property type="match status" value="1"/>
</dbReference>
<dbReference type="SUPFAM" id="SSF55729">
    <property type="entry name" value="Acyl-CoA N-acyltransferases (Nat)"/>
    <property type="match status" value="1"/>
</dbReference>
<dbReference type="PROSITE" id="PS51186">
    <property type="entry name" value="GNAT"/>
    <property type="match status" value="1"/>
</dbReference>
<gene>
    <name evidence="4" type="primary">bar</name>
    <name type="ordered locus">SCO3203</name>
    <name type="ORF">SCE22.20</name>
</gene>
<protein>
    <recommendedName>
        <fullName evidence="4">Phosphinothricin N-acetyltransferase</fullName>
        <shortName evidence="4">PPT N-acetyltransferase</shortName>
        <ecNumber evidence="3">2.3.1.183</ecNumber>
    </recommendedName>
    <alternativeName>
        <fullName evidence="5">Phosphinothricin-resistance protein</fullName>
    </alternativeName>
</protein>
<sequence>MPGTAEVQVRPGVEEDLKPLTDLYNHYVRETPITFDTEPFTPEERRPWLLSHPEDGPYRLRVATDAESQEILGYATSSPYRAKPAYATSVETTVYVAPGAGGRGIGSLLYASLFDALAAEDLHRAYAGIAQPNEASARLHARFGFRHVGTYREVGRKFGRYWDVAWYERPL</sequence>
<reference key="1">
    <citation type="journal article" date="1991" name="Gene">
        <title>Characterization of a gene conferring bialaphos resistance in Streptomyces coelicolor A3(2).</title>
        <authorList>
            <person name="Bedford D.J."/>
            <person name="Lewis C.G."/>
            <person name="Buttner M.J."/>
        </authorList>
    </citation>
    <scope>NUCLEOTIDE SEQUENCE [GENOMIC DNA]</scope>
    <scope>FUNCTION</scope>
    <scope>CATALYTIC ACTIVITY</scope>
    <scope>BIOPHYSICOCHEMICAL PROPERTIES</scope>
    <source>
        <strain>A3(2) / NRRL B-16638</strain>
    </source>
</reference>
<reference key="2">
    <citation type="journal article" date="2002" name="Nature">
        <title>Complete genome sequence of the model actinomycete Streptomyces coelicolor A3(2).</title>
        <authorList>
            <person name="Bentley S.D."/>
            <person name="Chater K.F."/>
            <person name="Cerdeno-Tarraga A.-M."/>
            <person name="Challis G.L."/>
            <person name="Thomson N.R."/>
            <person name="James K.D."/>
            <person name="Harris D.E."/>
            <person name="Quail M.A."/>
            <person name="Kieser H."/>
            <person name="Harper D."/>
            <person name="Bateman A."/>
            <person name="Brown S."/>
            <person name="Chandra G."/>
            <person name="Chen C.W."/>
            <person name="Collins M."/>
            <person name="Cronin A."/>
            <person name="Fraser A."/>
            <person name="Goble A."/>
            <person name="Hidalgo J."/>
            <person name="Hornsby T."/>
            <person name="Howarth S."/>
            <person name="Huang C.-H."/>
            <person name="Kieser T."/>
            <person name="Larke L."/>
            <person name="Murphy L.D."/>
            <person name="Oliver K."/>
            <person name="O'Neil S."/>
            <person name="Rabbinowitsch E."/>
            <person name="Rajandream M.A."/>
            <person name="Rutherford K.M."/>
            <person name="Rutter S."/>
            <person name="Seeger K."/>
            <person name="Saunders D."/>
            <person name="Sharp S."/>
            <person name="Squares R."/>
            <person name="Squares S."/>
            <person name="Taylor K."/>
            <person name="Warren T."/>
            <person name="Wietzorrek A."/>
            <person name="Woodward J.R."/>
            <person name="Barrell B.G."/>
            <person name="Parkhill J."/>
            <person name="Hopwood D.A."/>
        </authorList>
    </citation>
    <scope>NUCLEOTIDE SEQUENCE [LARGE SCALE GENOMIC DNA]</scope>
    <source>
        <strain>ATCC BAA-471 / A3(2) / M145</strain>
    </source>
</reference>
<reference key="3">
    <citation type="journal article" date="1990" name="J. Bacteriol.">
        <title>Cloning, disruption, and transcriptional analysis of three RNA polymerase sigma factor genes of Streptomyces coelicolor A3(2).</title>
        <authorList>
            <person name="Buttner M.J."/>
            <person name="Chater K.F."/>
            <person name="Bibb M.J."/>
        </authorList>
    </citation>
    <scope>NUCLEOTIDE SEQUENCE [GENOMIC DNA] OF 1-99</scope>
    <source>
        <strain>A3(2) / NRRL B-16638</strain>
    </source>
</reference>
<feature type="chain" id="PRO_0000074573" description="Phosphinothricin N-acetyltransferase">
    <location>
        <begin position="1"/>
        <end position="171"/>
    </location>
</feature>
<feature type="domain" description="N-acetyltransferase" evidence="2">
    <location>
        <begin position="7"/>
        <end position="171"/>
    </location>
</feature>
<feature type="binding site" evidence="1">
    <location>
        <begin position="94"/>
        <end position="96"/>
    </location>
    <ligand>
        <name>acetyl-CoA</name>
        <dbReference type="ChEBI" id="CHEBI:57288"/>
    </ligand>
</feature>
<feature type="binding site" evidence="1">
    <location>
        <begin position="102"/>
        <end position="107"/>
    </location>
    <ligand>
        <name>acetyl-CoA</name>
        <dbReference type="ChEBI" id="CHEBI:57288"/>
    </ligand>
</feature>
<feature type="binding site" evidence="1">
    <location>
        <position position="133"/>
    </location>
    <ligand>
        <name>acetyl-CoA</name>
        <dbReference type="ChEBI" id="CHEBI:57288"/>
    </ligand>
</feature>
<organism>
    <name type="scientific">Streptomyces coelicolor (strain ATCC BAA-471 / A3(2) / M145)</name>
    <dbReference type="NCBI Taxonomy" id="100226"/>
    <lineage>
        <taxon>Bacteria</taxon>
        <taxon>Bacillati</taxon>
        <taxon>Actinomycetota</taxon>
        <taxon>Actinomycetes</taxon>
        <taxon>Kitasatosporales</taxon>
        <taxon>Streptomycetaceae</taxon>
        <taxon>Streptomyces</taxon>
        <taxon>Streptomyces albidoflavus group</taxon>
    </lineage>
</organism>
<name>PAT_STRCO</name>
<comment type="function">
    <text evidence="3">Inactivates phosphinothricin (PPT) by transfer of an acetyl group from acetyl CoA. The physiological substrate could be a structurally related compound.</text>
</comment>
<comment type="catalytic activity">
    <reaction evidence="3">
        <text>phosphinothricin + acetyl-CoA = N-acetylphosphinothricin + CoA + H(+)</text>
        <dbReference type="Rhea" id="RHEA:12597"/>
        <dbReference type="ChEBI" id="CHEBI:15378"/>
        <dbReference type="ChEBI" id="CHEBI:57287"/>
        <dbReference type="ChEBI" id="CHEBI:57288"/>
        <dbReference type="ChEBI" id="CHEBI:58879"/>
        <dbReference type="ChEBI" id="CHEBI:58882"/>
        <dbReference type="EC" id="2.3.1.183"/>
    </reaction>
</comment>
<comment type="biophysicochemical properties">
    <kinetics>
        <KM evidence="3">1 mM for phosphinothricin</KM>
    </kinetics>
</comment>
<comment type="similarity">
    <text evidence="5">Belongs to the acetyltransferase family. PAT/BAR subfamily.</text>
</comment>
<keyword id="KW-0012">Acyltransferase</keyword>
<keyword id="KW-0046">Antibiotic resistance</keyword>
<keyword id="KW-0359">Herbicide resistance</keyword>
<keyword id="KW-1185">Reference proteome</keyword>
<keyword id="KW-0808">Transferase</keyword>
<proteinExistence type="evidence at protein level"/>
<accession>P21861</accession>
<evidence type="ECO:0000250" key="1">
    <source>
        <dbReference type="UniProtKB" id="Q8ZPD3"/>
    </source>
</evidence>
<evidence type="ECO:0000255" key="2">
    <source>
        <dbReference type="PROSITE-ProRule" id="PRU00532"/>
    </source>
</evidence>
<evidence type="ECO:0000269" key="3">
    <source>
    </source>
</evidence>
<evidence type="ECO:0000303" key="4">
    <source>
    </source>
</evidence>
<evidence type="ECO:0000305" key="5"/>